<evidence type="ECO:0000250" key="1">
    <source>
        <dbReference type="UniProtKB" id="P0CK64"/>
    </source>
</evidence>
<evidence type="ECO:0000250" key="2">
    <source>
        <dbReference type="UniProtKB" id="P0CK68"/>
    </source>
</evidence>
<evidence type="ECO:0000250" key="3">
    <source>
        <dbReference type="UniProtKB" id="P0DJW8"/>
    </source>
</evidence>
<evidence type="ECO:0000250" key="4">
    <source>
        <dbReference type="UniProtKB" id="P0DXO5"/>
    </source>
</evidence>
<evidence type="ECO:0000305" key="5"/>
<organismHost>
    <name type="scientific">Aves</name>
    <dbReference type="NCBI Taxonomy" id="8782"/>
</organismHost>
<organismHost>
    <name type="scientific">Homo sapiens</name>
    <name type="common">Human</name>
    <dbReference type="NCBI Taxonomy" id="9606"/>
</organismHost>
<comment type="function">
    <text evidence="1 4">Plays a major role in the shutoff of the host protein expression by cleaving mRNAs probably via an endonuclease activity. This host shutoff allows the virus to escape from the host antiviral response (By similarity). Hijacks host RNA splicing machinery to selectively target host RNAs containing introns for destruction. This may explain the preferential degradation of RNAs that have undergone co- or post-transcriptional processing (By similarity).</text>
</comment>
<comment type="subcellular location">
    <subcellularLocation>
        <location evidence="4">Host cytoplasm</location>
    </subcellularLocation>
    <subcellularLocation>
        <location evidence="4">Host nucleus</location>
    </subcellularLocation>
</comment>
<comment type="alternative products">
    <event type="ribosomal frameshifting"/>
    <isoform>
        <id>P0DJS8-1</id>
        <name>PA-X</name>
        <sequence type="displayed"/>
    </isoform>
    <isoform>
        <id>P31342-1</id>
        <name>PA</name>
        <sequence type="external"/>
    </isoform>
</comment>
<comment type="domain">
    <text evidence="1 4">The probable endonuclease active site in the N-terminus and the basic amino acid cluster in the C-terminus are important for the shutoff activity. The C-terminus acts as a nuclear localization signal (By similarity). The C-terminus is recruited to host protein complexes involved in nuclear Pol II RNA processing (By similarity).</text>
</comment>
<comment type="similarity">
    <text evidence="5">Belongs to the influenza viruses PA-X family.</text>
</comment>
<sequence>MEDFVRQCFNPMIVELAEKAMKEYGEDPKIETNKFAAICTHLEVCFMYSDFHFIDERGESIIVESGDPNALLKHRFEIIEGRDRTMAWTVVNSICNTTGVEKPKFLPDLYDYKENRFIEIGVTRREVHIYYLEKANKIKSEKTHIHIFSFTGEEMATKADYTLDEESRARIKTRLFTIRQEMASRGLWDSFVSPREAKRQLKKDLKSQEPCAGLPTKVSHRTSPALKTLEPMWMDSNRTAALRASFLKCQKK</sequence>
<gene>
    <name type="primary">PA</name>
</gene>
<reference key="1">
    <citation type="journal article" date="1989" name="Virus Res.">
        <title>Nucleotide sequence of the avian influenza A/Mallard/NY/6750/78 virus polymerase genes.</title>
        <authorList>
            <person name="Treanor J."/>
            <person name="Kawaoka Y."/>
            <person name="Miller R."/>
            <person name="Webster R.G."/>
            <person name="Murphy B."/>
        </authorList>
    </citation>
    <scope>NUCLEOTIDE SEQUENCE</scope>
</reference>
<reference key="2">
    <citation type="journal article" date="2000" name="J. Gen. Virol.">
        <title>Genetic analysis of the compatibility between polymerase proteins from human and avian strains of influenza A viruses.</title>
        <authorList>
            <person name="Naffakh N."/>
            <person name="Massin P."/>
            <person name="Escriou N."/>
            <person name="Crescenzo-Chaigne B."/>
            <person name="van der Werf S."/>
        </authorList>
    </citation>
    <scope>NUCLEOTIDE SEQUENCE [MRNA]</scope>
</reference>
<accession>P0DJS8</accession>
<protein>
    <recommendedName>
        <fullName>Protein PA-X</fullName>
    </recommendedName>
</protein>
<organism>
    <name type="scientific">Influenza A virus (strain A/Mallard/New York/6750/1978 H2N2)</name>
    <dbReference type="NCBI Taxonomy" id="384502"/>
    <lineage>
        <taxon>Viruses</taxon>
        <taxon>Riboviria</taxon>
        <taxon>Orthornavirae</taxon>
        <taxon>Negarnaviricota</taxon>
        <taxon>Polyploviricotina</taxon>
        <taxon>Insthoviricetes</taxon>
        <taxon>Articulavirales</taxon>
        <taxon>Orthomyxoviridae</taxon>
        <taxon>Alphainfluenzavirus</taxon>
        <taxon>Alphainfluenzavirus influenzae</taxon>
        <taxon>Influenza A virus</taxon>
    </lineage>
</organism>
<feature type="chain" id="PRO_0000419391" description="Protein PA-X">
    <location>
        <begin position="1"/>
        <end position="252"/>
    </location>
</feature>
<feature type="active site" evidence="2">
    <location>
        <position position="80"/>
    </location>
</feature>
<feature type="active site" evidence="2">
    <location>
        <position position="108"/>
    </location>
</feature>
<feature type="site" description="Important for efficient shutoff activity and nuclear localization" evidence="4">
    <location>
        <position position="195"/>
    </location>
</feature>
<feature type="site" description="Important for efficient shutoff activity and nuclear localization" evidence="4">
    <location>
        <position position="198"/>
    </location>
</feature>
<feature type="site" description="Important for efficient shutoff activity and nuclear localization" evidence="4">
    <location>
        <position position="199"/>
    </location>
</feature>
<feature type="site" description="Important for efficient shutoff activity" evidence="3">
    <location>
        <position position="202"/>
    </location>
</feature>
<feature type="site" description="Important for efficient shutoff activity" evidence="3">
    <location>
        <position position="203"/>
    </location>
</feature>
<feature type="site" description="Important for efficient shutoff activity" evidence="3">
    <location>
        <position position="206"/>
    </location>
</feature>
<proteinExistence type="evidence at transcript level"/>
<dbReference type="EMBL" id="AJ243994">
    <property type="status" value="NOT_ANNOTATED_CDS"/>
    <property type="molecule type" value="mRNA"/>
</dbReference>
<dbReference type="SMR" id="P0DJS8"/>
<dbReference type="IntAct" id="P0DJS8">
    <property type="interactions" value="1"/>
</dbReference>
<dbReference type="Proteomes" id="UP000098172">
    <property type="component" value="Genome"/>
</dbReference>
<dbReference type="GO" id="GO:0003723">
    <property type="term" value="F:RNA binding"/>
    <property type="evidence" value="ECO:0007669"/>
    <property type="project" value="InterPro"/>
</dbReference>
<dbReference type="GO" id="GO:0039694">
    <property type="term" value="P:viral RNA genome replication"/>
    <property type="evidence" value="ECO:0007669"/>
    <property type="project" value="InterPro"/>
</dbReference>
<dbReference type="GO" id="GO:0075523">
    <property type="term" value="P:viral translational frameshifting"/>
    <property type="evidence" value="ECO:0007669"/>
    <property type="project" value="UniProtKB-KW"/>
</dbReference>
<dbReference type="FunFam" id="3.40.91.90:FF:000001">
    <property type="entry name" value="Polymerase acidic protein"/>
    <property type="match status" value="1"/>
</dbReference>
<dbReference type="Gene3D" id="3.40.91.90">
    <property type="entry name" value="Influenza RNA-dependent RNA polymerase subunit PA, endonuclease domain"/>
    <property type="match status" value="1"/>
</dbReference>
<dbReference type="InterPro" id="IPR001009">
    <property type="entry name" value="PA/PA-X"/>
</dbReference>
<dbReference type="InterPro" id="IPR038372">
    <property type="entry name" value="PA/PA-X_sf"/>
</dbReference>
<dbReference type="Pfam" id="PF00603">
    <property type="entry name" value="Flu_PA"/>
    <property type="match status" value="1"/>
</dbReference>
<name>PAX_I78A3</name>
<keyword id="KW-1132">Decay of host mRNAs by virus</keyword>
<keyword id="KW-1262">Eukaryotic host gene expression shutoff by virus</keyword>
<keyword id="KW-1035">Host cytoplasm</keyword>
<keyword id="KW-1190">Host gene expression shutoff by virus</keyword>
<keyword id="KW-1192">Host mRNA suppression by virus</keyword>
<keyword id="KW-1048">Host nucleus</keyword>
<keyword id="KW-0945">Host-virus interaction</keyword>
<keyword id="KW-0688">Ribosomal frameshifting</keyword>